<protein>
    <recommendedName>
        <fullName evidence="1">Potassium-transporting ATPase ATP-binding subunit</fullName>
        <ecNumber evidence="1">7.2.2.6</ecNumber>
    </recommendedName>
    <alternativeName>
        <fullName evidence="1">ATP phosphohydrolase [potassium-transporting] B chain</fullName>
    </alternativeName>
    <alternativeName>
        <fullName evidence="1">Potassium-binding and translocating subunit B</fullName>
    </alternativeName>
    <alternativeName>
        <fullName evidence="1">Potassium-translocating ATPase B chain</fullName>
    </alternativeName>
</protein>
<name>KDPB_ECO5E</name>
<proteinExistence type="inferred from homology"/>
<gene>
    <name evidence="1" type="primary">kdpB</name>
    <name type="ordered locus">ECH74115_0790</name>
</gene>
<keyword id="KW-0067">ATP-binding</keyword>
<keyword id="KW-0997">Cell inner membrane</keyword>
<keyword id="KW-1003">Cell membrane</keyword>
<keyword id="KW-0406">Ion transport</keyword>
<keyword id="KW-0460">Magnesium</keyword>
<keyword id="KW-0472">Membrane</keyword>
<keyword id="KW-0479">Metal-binding</keyword>
<keyword id="KW-0547">Nucleotide-binding</keyword>
<keyword id="KW-0597">Phosphoprotein</keyword>
<keyword id="KW-0630">Potassium</keyword>
<keyword id="KW-0633">Potassium transport</keyword>
<keyword id="KW-1278">Translocase</keyword>
<keyword id="KW-0812">Transmembrane</keyword>
<keyword id="KW-1133">Transmembrane helix</keyword>
<keyword id="KW-0813">Transport</keyword>
<organism>
    <name type="scientific">Escherichia coli O157:H7 (strain EC4115 / EHEC)</name>
    <dbReference type="NCBI Taxonomy" id="444450"/>
    <lineage>
        <taxon>Bacteria</taxon>
        <taxon>Pseudomonadati</taxon>
        <taxon>Pseudomonadota</taxon>
        <taxon>Gammaproteobacteria</taxon>
        <taxon>Enterobacterales</taxon>
        <taxon>Enterobacteriaceae</taxon>
        <taxon>Escherichia</taxon>
    </lineage>
</organism>
<comment type="function">
    <text evidence="1">Part of the high-affinity ATP-driven potassium transport (or Kdp) system, which catalyzes the hydrolysis of ATP coupled with the electrogenic transport of potassium into the cytoplasm. This subunit is responsible for energy coupling to the transport system and for the release of the potassium ions to the cytoplasm.</text>
</comment>
<comment type="catalytic activity">
    <reaction evidence="1">
        <text>K(+)(out) + ATP + H2O = K(+)(in) + ADP + phosphate + H(+)</text>
        <dbReference type="Rhea" id="RHEA:16777"/>
        <dbReference type="ChEBI" id="CHEBI:15377"/>
        <dbReference type="ChEBI" id="CHEBI:15378"/>
        <dbReference type="ChEBI" id="CHEBI:29103"/>
        <dbReference type="ChEBI" id="CHEBI:30616"/>
        <dbReference type="ChEBI" id="CHEBI:43474"/>
        <dbReference type="ChEBI" id="CHEBI:456216"/>
        <dbReference type="EC" id="7.2.2.6"/>
    </reaction>
    <physiologicalReaction direction="left-to-right" evidence="1">
        <dbReference type="Rhea" id="RHEA:16778"/>
    </physiologicalReaction>
</comment>
<comment type="subunit">
    <text evidence="1">The system is composed of three essential subunits: KdpA, KdpB and KdpC.</text>
</comment>
<comment type="subcellular location">
    <subcellularLocation>
        <location evidence="1">Cell inner membrane</location>
        <topology evidence="1">Multi-pass membrane protein</topology>
    </subcellularLocation>
</comment>
<comment type="similarity">
    <text evidence="1">Belongs to the cation transport ATPase (P-type) (TC 3.A.3) family. Type IA subfamily.</text>
</comment>
<reference key="1">
    <citation type="journal article" date="2011" name="Proc. Natl. Acad. Sci. U.S.A.">
        <title>Genomic anatomy of Escherichia coli O157:H7 outbreaks.</title>
        <authorList>
            <person name="Eppinger M."/>
            <person name="Mammel M.K."/>
            <person name="Leclerc J.E."/>
            <person name="Ravel J."/>
            <person name="Cebula T.A."/>
        </authorList>
    </citation>
    <scope>NUCLEOTIDE SEQUENCE [LARGE SCALE GENOMIC DNA]</scope>
    <source>
        <strain>EC4115 / EHEC</strain>
    </source>
</reference>
<feature type="chain" id="PRO_1000114951" description="Potassium-transporting ATPase ATP-binding subunit">
    <location>
        <begin position="1"/>
        <end position="682"/>
    </location>
</feature>
<feature type="transmembrane region" description="Helical" evidence="1">
    <location>
        <begin position="34"/>
        <end position="54"/>
    </location>
</feature>
<feature type="transmembrane region" description="Helical" evidence="1">
    <location>
        <begin position="62"/>
        <end position="82"/>
    </location>
</feature>
<feature type="transmembrane region" description="Helical" evidence="1">
    <location>
        <begin position="219"/>
        <end position="239"/>
    </location>
</feature>
<feature type="transmembrane region" description="Helical" evidence="1">
    <location>
        <begin position="254"/>
        <end position="274"/>
    </location>
</feature>
<feature type="transmembrane region" description="Helical" evidence="1">
    <location>
        <begin position="588"/>
        <end position="608"/>
    </location>
</feature>
<feature type="transmembrane region" description="Helical" evidence="1">
    <location>
        <begin position="616"/>
        <end position="636"/>
    </location>
</feature>
<feature type="transmembrane region" description="Helical" evidence="1">
    <location>
        <begin position="656"/>
        <end position="676"/>
    </location>
</feature>
<feature type="active site" description="4-aspartylphosphate intermediate" evidence="1">
    <location>
        <position position="307"/>
    </location>
</feature>
<feature type="binding site" evidence="1">
    <location>
        <position position="344"/>
    </location>
    <ligand>
        <name>ATP</name>
        <dbReference type="ChEBI" id="CHEBI:30616"/>
    </ligand>
</feature>
<feature type="binding site" evidence="1">
    <location>
        <position position="348"/>
    </location>
    <ligand>
        <name>ATP</name>
        <dbReference type="ChEBI" id="CHEBI:30616"/>
    </ligand>
</feature>
<feature type="binding site" evidence="1">
    <location>
        <begin position="377"/>
        <end position="384"/>
    </location>
    <ligand>
        <name>ATP</name>
        <dbReference type="ChEBI" id="CHEBI:30616"/>
    </ligand>
</feature>
<feature type="binding site" evidence="1">
    <location>
        <position position="395"/>
    </location>
    <ligand>
        <name>ATP</name>
        <dbReference type="ChEBI" id="CHEBI:30616"/>
    </ligand>
</feature>
<feature type="binding site" evidence="1">
    <location>
        <position position="518"/>
    </location>
    <ligand>
        <name>Mg(2+)</name>
        <dbReference type="ChEBI" id="CHEBI:18420"/>
    </ligand>
</feature>
<feature type="binding site" evidence="1">
    <location>
        <position position="522"/>
    </location>
    <ligand>
        <name>Mg(2+)</name>
        <dbReference type="ChEBI" id="CHEBI:18420"/>
    </ligand>
</feature>
<dbReference type="EC" id="7.2.2.6" evidence="1"/>
<dbReference type="EMBL" id="CP001164">
    <property type="protein sequence ID" value="ACI35778.1"/>
    <property type="molecule type" value="Genomic_DNA"/>
</dbReference>
<dbReference type="RefSeq" id="WP_000087992.1">
    <property type="nucleotide sequence ID" value="NC_011353.1"/>
</dbReference>
<dbReference type="SMR" id="B5YQN9"/>
<dbReference type="KEGG" id="ecf:ECH74115_0790"/>
<dbReference type="HOGENOM" id="CLU_025728_2_0_6"/>
<dbReference type="GO" id="GO:0005886">
    <property type="term" value="C:plasma membrane"/>
    <property type="evidence" value="ECO:0007669"/>
    <property type="project" value="UniProtKB-SubCell"/>
</dbReference>
<dbReference type="GO" id="GO:0005524">
    <property type="term" value="F:ATP binding"/>
    <property type="evidence" value="ECO:0007669"/>
    <property type="project" value="UniProtKB-UniRule"/>
</dbReference>
<dbReference type="GO" id="GO:0016887">
    <property type="term" value="F:ATP hydrolysis activity"/>
    <property type="evidence" value="ECO:0007669"/>
    <property type="project" value="InterPro"/>
</dbReference>
<dbReference type="GO" id="GO:0000287">
    <property type="term" value="F:magnesium ion binding"/>
    <property type="evidence" value="ECO:0007669"/>
    <property type="project" value="UniProtKB-UniRule"/>
</dbReference>
<dbReference type="GO" id="GO:0008556">
    <property type="term" value="F:P-type potassium transmembrane transporter activity"/>
    <property type="evidence" value="ECO:0007669"/>
    <property type="project" value="UniProtKB-UniRule"/>
</dbReference>
<dbReference type="CDD" id="cd02078">
    <property type="entry name" value="P-type_ATPase_K"/>
    <property type="match status" value="1"/>
</dbReference>
<dbReference type="FunFam" id="2.70.150.10:FF:000010">
    <property type="entry name" value="Potassium-transporting ATPase ATP-binding subunit"/>
    <property type="match status" value="1"/>
</dbReference>
<dbReference type="FunFam" id="3.40.1110.10:FF:000007">
    <property type="entry name" value="Potassium-transporting ATPase ATP-binding subunit"/>
    <property type="match status" value="1"/>
</dbReference>
<dbReference type="Gene3D" id="3.40.1110.10">
    <property type="entry name" value="Calcium-transporting ATPase, cytoplasmic domain N"/>
    <property type="match status" value="1"/>
</dbReference>
<dbReference type="Gene3D" id="2.70.150.10">
    <property type="entry name" value="Calcium-transporting ATPase, cytoplasmic transduction domain A"/>
    <property type="match status" value="1"/>
</dbReference>
<dbReference type="Gene3D" id="3.40.50.1000">
    <property type="entry name" value="HAD superfamily/HAD-like"/>
    <property type="match status" value="1"/>
</dbReference>
<dbReference type="HAMAP" id="MF_00285">
    <property type="entry name" value="KdpB"/>
    <property type="match status" value="1"/>
</dbReference>
<dbReference type="InterPro" id="IPR023299">
    <property type="entry name" value="ATPase_P-typ_cyto_dom_N"/>
</dbReference>
<dbReference type="InterPro" id="IPR018303">
    <property type="entry name" value="ATPase_P-typ_P_site"/>
</dbReference>
<dbReference type="InterPro" id="IPR023298">
    <property type="entry name" value="ATPase_P-typ_TM_dom_sf"/>
</dbReference>
<dbReference type="InterPro" id="IPR008250">
    <property type="entry name" value="ATPase_P-typ_transduc_dom_A_sf"/>
</dbReference>
<dbReference type="InterPro" id="IPR036412">
    <property type="entry name" value="HAD-like_sf"/>
</dbReference>
<dbReference type="InterPro" id="IPR023214">
    <property type="entry name" value="HAD_sf"/>
</dbReference>
<dbReference type="InterPro" id="IPR006391">
    <property type="entry name" value="P-type_ATPase_bsu_IA"/>
</dbReference>
<dbReference type="InterPro" id="IPR001757">
    <property type="entry name" value="P_typ_ATPase"/>
</dbReference>
<dbReference type="InterPro" id="IPR044492">
    <property type="entry name" value="P_typ_ATPase_HD_dom"/>
</dbReference>
<dbReference type="NCBIfam" id="TIGR01494">
    <property type="entry name" value="ATPase_P-type"/>
    <property type="match status" value="2"/>
</dbReference>
<dbReference type="NCBIfam" id="TIGR01497">
    <property type="entry name" value="kdpB"/>
    <property type="match status" value="1"/>
</dbReference>
<dbReference type="PANTHER" id="PTHR43743">
    <property type="entry name" value="POTASSIUM-TRANSPORTING ATPASE ATP-BINDING SUBUNIT"/>
    <property type="match status" value="1"/>
</dbReference>
<dbReference type="PANTHER" id="PTHR43743:SF1">
    <property type="entry name" value="POTASSIUM-TRANSPORTING ATPASE ATP-BINDING SUBUNIT"/>
    <property type="match status" value="1"/>
</dbReference>
<dbReference type="Pfam" id="PF00122">
    <property type="entry name" value="E1-E2_ATPase"/>
    <property type="match status" value="1"/>
</dbReference>
<dbReference type="Pfam" id="PF00702">
    <property type="entry name" value="Hydrolase"/>
    <property type="match status" value="1"/>
</dbReference>
<dbReference type="PRINTS" id="PR00119">
    <property type="entry name" value="CATATPASE"/>
</dbReference>
<dbReference type="SFLD" id="SFLDS00003">
    <property type="entry name" value="Haloacid_Dehalogenase"/>
    <property type="match status" value="1"/>
</dbReference>
<dbReference type="SFLD" id="SFLDF00027">
    <property type="entry name" value="p-type_atpase"/>
    <property type="match status" value="1"/>
</dbReference>
<dbReference type="SUPFAM" id="SSF81653">
    <property type="entry name" value="Calcium ATPase, transduction domain A"/>
    <property type="match status" value="1"/>
</dbReference>
<dbReference type="SUPFAM" id="SSF81665">
    <property type="entry name" value="Calcium ATPase, transmembrane domain M"/>
    <property type="match status" value="1"/>
</dbReference>
<dbReference type="SUPFAM" id="SSF56784">
    <property type="entry name" value="HAD-like"/>
    <property type="match status" value="1"/>
</dbReference>
<dbReference type="SUPFAM" id="SSF81660">
    <property type="entry name" value="Metal cation-transporting ATPase, ATP-binding domain N"/>
    <property type="match status" value="1"/>
</dbReference>
<dbReference type="PROSITE" id="PS00154">
    <property type="entry name" value="ATPASE_E1_E2"/>
    <property type="match status" value="1"/>
</dbReference>
<evidence type="ECO:0000255" key="1">
    <source>
        <dbReference type="HAMAP-Rule" id="MF_00285"/>
    </source>
</evidence>
<accession>B5YQN9</accession>
<sequence>MSRKQLALFEPTLVVQALKEAVKKLNPQAQWRNPVMFIVWIGSLLTTCISIAMASGAMPGNALFSVAISGWLWVTVLFANFAEALAEGRSKAQANSLKGVKKTAFARKLREPKYGAAADKVPADQLRKGDIVLVEAGDIIPCDGEVIEGGASVDESAITGESAPVIRESGGDFASVTGGTRILSDWLVIECSVNPGETFLDRMIAMVEGAQRRKTPNEIALTILLIALTIVFLLATATLWPFSAWGGNAVSVTVLVALLVCLIPTTIGGLLSAIGVAGMSRMLGANVVATSGRAVEAAGDVDVLLLDKTGTITLGNRQASEFIPAQGVDEKTLADAAQLASLADETPEGRSIVILAKQRFNLRERDVQSLHATFVPFTAQSRMSGINIDNRMIRKGSVDAIRRHVEANGGHFPADVDQKVDQVARQGATPLVVVEGSRVLGVIALKDIVKGGIKERFAQLRKMGIKTVMITGDNRLTAAAIAAEAGVDDFLAEATPEAKLALIRQYQAEGRLVAMTGDGTNDAPALAQADVAVAMNSGTQAAKEAGNMVDLDSNPTKLIEVVHIGKQMLMTRGSLTTFSIANDVAKYFAIIPAAFAVTYPQLNALNIMRLHSPDSAILSAVIFNALIIVFLIPLALKGVSYKPLTASAMLRRNLWIYGLGGLLVPFIGIKVIDLLLTVCGLV</sequence>